<protein>
    <recommendedName>
        <fullName evidence="1">NADPH dehydrogenase</fullName>
        <ecNumber evidence="1">1.6.99.1</ecNumber>
    </recommendedName>
</protein>
<accession>A4IQK7</accession>
<proteinExistence type="inferred from homology"/>
<comment type="function">
    <text evidence="1">Catalyzes the reduction of the double bond of an array of alpha,beta-unsaturated aldehydes and ketones. It also reduces the nitro group of nitroester and nitroaromatic compounds. It could have a role in detoxification processes.</text>
</comment>
<comment type="catalytic activity">
    <reaction evidence="1">
        <text>A + NADPH + H(+) = AH2 + NADP(+)</text>
        <dbReference type="Rhea" id="RHEA:13149"/>
        <dbReference type="ChEBI" id="CHEBI:13193"/>
        <dbReference type="ChEBI" id="CHEBI:15378"/>
        <dbReference type="ChEBI" id="CHEBI:17499"/>
        <dbReference type="ChEBI" id="CHEBI:57783"/>
        <dbReference type="ChEBI" id="CHEBI:58349"/>
        <dbReference type="EC" id="1.6.99.1"/>
    </reaction>
</comment>
<comment type="cofactor">
    <cofactor evidence="1">
        <name>FMN</name>
        <dbReference type="ChEBI" id="CHEBI:58210"/>
    </cofactor>
</comment>
<comment type="subunit">
    <text evidence="1">Homotetramer.</text>
</comment>
<comment type="similarity">
    <text evidence="1">Belongs to the NADH:flavin oxidoreductase/NADH oxidase family. NamA subfamily.</text>
</comment>
<sequence>MNTVLFSPYTTRGLTLKNRIVMSPMCMYSCDTKDGTVRTWHKIHYPARAIGQVGLIIVEATGVTPQGRISEHDLGIWDDDHIHGLHELVGLVKEHGAAIGIQLAHAGRKSEVPGEIIAPSAIPFNESSPTPKEMTKADIEKTVQAFQDGARRAKKAGFDVIEIHAAHGYLINEFLSPLSNRRQDEYGGSPENRYHFLGEVIDAVREVWDGPLFVRISASDYHPDGLTVKDYVPYVKRMKEQGVDLVDVSSGAVVPARIDVYPGYQVPFAEFIRREAGIPTGAVGLITSGWQAEEVLHNGRADLVFLGRELLRNPYWPYAAAKELGVKIEAPVQYERGWRF</sequence>
<name>NAMA_GEOTN</name>
<evidence type="ECO:0000255" key="1">
    <source>
        <dbReference type="HAMAP-Rule" id="MF_01614"/>
    </source>
</evidence>
<organism>
    <name type="scientific">Geobacillus thermodenitrificans (strain NG80-2)</name>
    <dbReference type="NCBI Taxonomy" id="420246"/>
    <lineage>
        <taxon>Bacteria</taxon>
        <taxon>Bacillati</taxon>
        <taxon>Bacillota</taxon>
        <taxon>Bacilli</taxon>
        <taxon>Bacillales</taxon>
        <taxon>Anoxybacillaceae</taxon>
        <taxon>Geobacillus</taxon>
    </lineage>
</organism>
<dbReference type="EC" id="1.6.99.1" evidence="1"/>
<dbReference type="EMBL" id="CP000557">
    <property type="protein sequence ID" value="ABO67611.1"/>
    <property type="molecule type" value="Genomic_DNA"/>
</dbReference>
<dbReference type="RefSeq" id="WP_011887749.1">
    <property type="nucleotide sequence ID" value="NC_009328.1"/>
</dbReference>
<dbReference type="SMR" id="A4IQK7"/>
<dbReference type="KEGG" id="gtn:GTNG_2262"/>
<dbReference type="eggNOG" id="COG1902">
    <property type="taxonomic scope" value="Bacteria"/>
</dbReference>
<dbReference type="HOGENOM" id="CLU_012153_2_1_9"/>
<dbReference type="Proteomes" id="UP000001578">
    <property type="component" value="Chromosome"/>
</dbReference>
<dbReference type="GO" id="GO:0010181">
    <property type="term" value="F:FMN binding"/>
    <property type="evidence" value="ECO:0007669"/>
    <property type="project" value="UniProtKB-UniRule"/>
</dbReference>
<dbReference type="GO" id="GO:0050661">
    <property type="term" value="F:NADP binding"/>
    <property type="evidence" value="ECO:0007669"/>
    <property type="project" value="UniProtKB-UniRule"/>
</dbReference>
<dbReference type="GO" id="GO:0003959">
    <property type="term" value="F:NADPH dehydrogenase activity"/>
    <property type="evidence" value="ECO:0007669"/>
    <property type="project" value="UniProtKB-UniRule"/>
</dbReference>
<dbReference type="GO" id="GO:0009636">
    <property type="term" value="P:response to toxic substance"/>
    <property type="evidence" value="ECO:0007669"/>
    <property type="project" value="UniProtKB-KW"/>
</dbReference>
<dbReference type="CDD" id="cd02932">
    <property type="entry name" value="OYE_YqiM_FMN"/>
    <property type="match status" value="1"/>
</dbReference>
<dbReference type="Gene3D" id="3.20.20.70">
    <property type="entry name" value="Aldolase class I"/>
    <property type="match status" value="1"/>
</dbReference>
<dbReference type="HAMAP" id="MF_01614">
    <property type="entry name" value="NamA"/>
    <property type="match status" value="1"/>
</dbReference>
<dbReference type="InterPro" id="IPR013785">
    <property type="entry name" value="Aldolase_TIM"/>
</dbReference>
<dbReference type="InterPro" id="IPR023663">
    <property type="entry name" value="NADPH_DH_bac"/>
</dbReference>
<dbReference type="InterPro" id="IPR001155">
    <property type="entry name" value="OxRdtase_FMN_N"/>
</dbReference>
<dbReference type="InterPro" id="IPR044152">
    <property type="entry name" value="YqjM-like"/>
</dbReference>
<dbReference type="NCBIfam" id="NF010047">
    <property type="entry name" value="PRK13523.1"/>
    <property type="match status" value="1"/>
</dbReference>
<dbReference type="PANTHER" id="PTHR43303">
    <property type="entry name" value="NADPH DEHYDROGENASE C23G7.10C-RELATED"/>
    <property type="match status" value="1"/>
</dbReference>
<dbReference type="PANTHER" id="PTHR43303:SF4">
    <property type="entry name" value="NADPH DEHYDROGENASE C23G7.10C-RELATED"/>
    <property type="match status" value="1"/>
</dbReference>
<dbReference type="Pfam" id="PF00724">
    <property type="entry name" value="Oxidored_FMN"/>
    <property type="match status" value="1"/>
</dbReference>
<dbReference type="SUPFAM" id="SSF51395">
    <property type="entry name" value="FMN-linked oxidoreductases"/>
    <property type="match status" value="1"/>
</dbReference>
<gene>
    <name evidence="1" type="primary">namA</name>
    <name type="ordered locus">GTNG_2262</name>
</gene>
<keyword id="KW-0216">Detoxification</keyword>
<keyword id="KW-0285">Flavoprotein</keyword>
<keyword id="KW-0288">FMN</keyword>
<keyword id="KW-0521">NADP</keyword>
<keyword id="KW-0560">Oxidoreductase</keyword>
<feature type="chain" id="PRO_1000069457" description="NADPH dehydrogenase">
    <location>
        <begin position="1"/>
        <end position="340"/>
    </location>
</feature>
<feature type="binding site" evidence="1">
    <location>
        <begin position="23"/>
        <end position="26"/>
    </location>
    <ligand>
        <name>FMN</name>
        <dbReference type="ChEBI" id="CHEBI:58210"/>
    </ligand>
</feature>
<feature type="binding site" evidence="1">
    <location>
        <position position="28"/>
    </location>
    <ligand>
        <name>substrate</name>
    </ligand>
</feature>
<feature type="binding site" evidence="1">
    <location>
        <position position="60"/>
    </location>
    <ligand>
        <name>FMN</name>
        <dbReference type="ChEBI" id="CHEBI:58210"/>
    </ligand>
</feature>
<feature type="binding site" evidence="1">
    <location>
        <position position="102"/>
    </location>
    <ligand>
        <name>FMN</name>
        <dbReference type="ChEBI" id="CHEBI:58210"/>
    </ligand>
</feature>
<feature type="binding site" evidence="1">
    <location>
        <begin position="164"/>
        <end position="167"/>
    </location>
    <ligand>
        <name>substrate</name>
    </ligand>
</feature>
<feature type="binding site" evidence="1">
    <location>
        <position position="215"/>
    </location>
    <ligand>
        <name>FMN</name>
        <dbReference type="ChEBI" id="CHEBI:58210"/>
    </ligand>
</feature>
<feature type="binding site" evidence="1">
    <location>
        <begin position="307"/>
        <end position="308"/>
    </location>
    <ligand>
        <name>FMN</name>
        <dbReference type="ChEBI" id="CHEBI:58210"/>
    </ligand>
</feature>
<reference key="1">
    <citation type="journal article" date="2007" name="Proc. Natl. Acad. Sci. U.S.A.">
        <title>Genome and proteome of long-chain alkane degrading Geobacillus thermodenitrificans NG80-2 isolated from a deep-subsurface oil reservoir.</title>
        <authorList>
            <person name="Feng L."/>
            <person name="Wang W."/>
            <person name="Cheng J."/>
            <person name="Ren Y."/>
            <person name="Zhao G."/>
            <person name="Gao C."/>
            <person name="Tang Y."/>
            <person name="Liu X."/>
            <person name="Han W."/>
            <person name="Peng X."/>
            <person name="Liu R."/>
            <person name="Wang L."/>
        </authorList>
    </citation>
    <scope>NUCLEOTIDE SEQUENCE [LARGE SCALE GENOMIC DNA]</scope>
    <source>
        <strain>NG80-2</strain>
    </source>
</reference>